<sequence>MARFVVVALLVQLSLFGLEAIQHPPKIQVYSRYPADNGKPNFLNCYVSGFHPSDIEVDLLKNGKKIEKVEHSDLSFSKDWSFYLLYYTEFTPNEKDEYACRVSHVTFSTPKTVKWDRNM</sequence>
<accession>O77518</accession>
<organism>
    <name type="scientific">Saguinus imperator</name>
    <name type="common">Emperor tamarin</name>
    <dbReference type="NCBI Taxonomy" id="9491"/>
    <lineage>
        <taxon>Eukaryota</taxon>
        <taxon>Metazoa</taxon>
        <taxon>Chordata</taxon>
        <taxon>Craniata</taxon>
        <taxon>Vertebrata</taxon>
        <taxon>Euteleostomi</taxon>
        <taxon>Mammalia</taxon>
        <taxon>Eutheria</taxon>
        <taxon>Euarchontoglires</taxon>
        <taxon>Primates</taxon>
        <taxon>Haplorrhini</taxon>
        <taxon>Platyrrhini</taxon>
        <taxon>Cebidae</taxon>
        <taxon>Callitrichinae</taxon>
        <taxon>Saguinus</taxon>
    </lineage>
</organism>
<evidence type="ECO:0000250" key="1"/>
<evidence type="ECO:0000255" key="2">
    <source>
        <dbReference type="PROSITE-ProRule" id="PRU00114"/>
    </source>
</evidence>
<evidence type="ECO:0000305" key="3"/>
<dbReference type="EMBL" id="AF032033">
    <property type="protein sequence ID" value="AAC52106.1"/>
    <property type="molecule type" value="Genomic_DNA"/>
</dbReference>
<dbReference type="EMBL" id="AF032032">
    <property type="protein sequence ID" value="AAC52106.1"/>
    <property type="status" value="JOINED"/>
    <property type="molecule type" value="Genomic_DNA"/>
</dbReference>
<dbReference type="BMRB" id="O77518"/>
<dbReference type="SMR" id="O77518"/>
<dbReference type="GO" id="GO:0005576">
    <property type="term" value="C:extracellular region"/>
    <property type="evidence" value="ECO:0007669"/>
    <property type="project" value="UniProtKB-SubCell"/>
</dbReference>
<dbReference type="GO" id="GO:0042612">
    <property type="term" value="C:MHC class I protein complex"/>
    <property type="evidence" value="ECO:0007669"/>
    <property type="project" value="UniProtKB-KW"/>
</dbReference>
<dbReference type="GO" id="GO:0002474">
    <property type="term" value="P:antigen processing and presentation of peptide antigen via MHC class I"/>
    <property type="evidence" value="ECO:0007669"/>
    <property type="project" value="UniProtKB-KW"/>
</dbReference>
<dbReference type="GO" id="GO:0006955">
    <property type="term" value="P:immune response"/>
    <property type="evidence" value="ECO:0007669"/>
    <property type="project" value="InterPro"/>
</dbReference>
<dbReference type="CDD" id="cd05770">
    <property type="entry name" value="IgC1_beta2m"/>
    <property type="match status" value="1"/>
</dbReference>
<dbReference type="FunFam" id="2.60.40.10:FF:001005">
    <property type="entry name" value="Beta-2-microglobulin"/>
    <property type="match status" value="1"/>
</dbReference>
<dbReference type="Gene3D" id="2.60.40.10">
    <property type="entry name" value="Immunoglobulins"/>
    <property type="match status" value="1"/>
</dbReference>
<dbReference type="InterPro" id="IPR015707">
    <property type="entry name" value="B2Microglobulin"/>
</dbReference>
<dbReference type="InterPro" id="IPR007110">
    <property type="entry name" value="Ig-like_dom"/>
</dbReference>
<dbReference type="InterPro" id="IPR036179">
    <property type="entry name" value="Ig-like_dom_sf"/>
</dbReference>
<dbReference type="InterPro" id="IPR013783">
    <property type="entry name" value="Ig-like_fold"/>
</dbReference>
<dbReference type="InterPro" id="IPR003006">
    <property type="entry name" value="Ig/MHC_CS"/>
</dbReference>
<dbReference type="InterPro" id="IPR003597">
    <property type="entry name" value="Ig_C1-set"/>
</dbReference>
<dbReference type="InterPro" id="IPR050160">
    <property type="entry name" value="MHC/Immunoglobulin"/>
</dbReference>
<dbReference type="PANTHER" id="PTHR19944:SF62">
    <property type="entry name" value="BETA-2-MICROGLOBULIN"/>
    <property type="match status" value="1"/>
</dbReference>
<dbReference type="PANTHER" id="PTHR19944">
    <property type="entry name" value="MHC CLASS II-RELATED"/>
    <property type="match status" value="1"/>
</dbReference>
<dbReference type="Pfam" id="PF07654">
    <property type="entry name" value="C1-set"/>
    <property type="match status" value="1"/>
</dbReference>
<dbReference type="SMART" id="SM00407">
    <property type="entry name" value="IGc1"/>
    <property type="match status" value="1"/>
</dbReference>
<dbReference type="SUPFAM" id="SSF48726">
    <property type="entry name" value="Immunoglobulin"/>
    <property type="match status" value="1"/>
</dbReference>
<dbReference type="PROSITE" id="PS50835">
    <property type="entry name" value="IG_LIKE"/>
    <property type="match status" value="1"/>
</dbReference>
<dbReference type="PROSITE" id="PS00290">
    <property type="entry name" value="IG_MHC"/>
    <property type="match status" value="1"/>
</dbReference>
<name>B2MG_SAGIM</name>
<proteinExistence type="inferred from homology"/>
<feature type="signal peptide" evidence="1">
    <location>
        <begin position="1"/>
        <end position="20"/>
    </location>
</feature>
<feature type="chain" id="PRO_0000018794" description="Beta-2-microglobulin">
    <location>
        <begin position="21"/>
        <end position="119"/>
    </location>
</feature>
<feature type="domain" description="Ig-like C1-type">
    <location>
        <begin position="25"/>
        <end position="114"/>
    </location>
</feature>
<feature type="disulfide bond" evidence="2">
    <location>
        <begin position="45"/>
        <end position="100"/>
    </location>
</feature>
<protein>
    <recommendedName>
        <fullName>Beta-2-microglobulin</fullName>
    </recommendedName>
</protein>
<reference key="1">
    <citation type="journal article" date="1998" name="Immunogenetics">
        <title>Beta-2-microglobulin in neotropical primates (Platyrrhini).</title>
        <authorList>
            <person name="Canavez F.C."/>
            <person name="Ladasky J.J."/>
            <person name="Muniz J.A.P.C."/>
            <person name="Seuanez H.N."/>
            <person name="Parham P."/>
        </authorList>
    </citation>
    <scope>NUCLEOTIDE SEQUENCE [GENOMIC DNA]</scope>
    <source>
        <tissue>Blood</tissue>
    </source>
</reference>
<gene>
    <name type="primary">B2M</name>
</gene>
<comment type="function">
    <text evidence="1">Component of the class I major histocompatibility complex (MHC). Involved in the presentation of peptide antigens to the immune system (By similarity).</text>
</comment>
<comment type="subunit">
    <text evidence="1">Heterodimer of an alpha chain and a beta chain. Beta-2-microglobulin is the beta-chain of major histocompatibility complex class I molecules (By similarity).</text>
</comment>
<comment type="subcellular location">
    <subcellularLocation>
        <location evidence="1">Secreted</location>
    </subcellularLocation>
</comment>
<comment type="similarity">
    <text evidence="3">Belongs to the beta-2-microglobulin family.</text>
</comment>
<keyword id="KW-1015">Disulfide bond</keyword>
<keyword id="KW-0391">Immunity</keyword>
<keyword id="KW-0393">Immunoglobulin domain</keyword>
<keyword id="KW-0490">MHC I</keyword>
<keyword id="KW-0964">Secreted</keyword>
<keyword id="KW-0732">Signal</keyword>